<evidence type="ECO:0000255" key="1">
    <source>
        <dbReference type="HAMAP-Rule" id="MF_00565"/>
    </source>
</evidence>
<feature type="chain" id="PRO_0000213099" description="D-alanyl carrier protein">
    <location>
        <begin position="1"/>
        <end position="78"/>
    </location>
</feature>
<feature type="domain" description="Carrier" evidence="1">
    <location>
        <begin position="1"/>
        <end position="78"/>
    </location>
</feature>
<feature type="modified residue" description="O-(pantetheine 4'-phosphoryl)serine" evidence="1">
    <location>
        <position position="36"/>
    </location>
</feature>
<proteinExistence type="inferred from homology"/>
<dbReference type="EMBL" id="BA000018">
    <property type="protein sequence ID" value="BAB42034.1"/>
    <property type="molecule type" value="Genomic_DNA"/>
</dbReference>
<dbReference type="PIR" id="G89859">
    <property type="entry name" value="G89859"/>
</dbReference>
<dbReference type="RefSeq" id="WP_000395692.1">
    <property type="nucleotide sequence ID" value="NC_002745.2"/>
</dbReference>
<dbReference type="SMR" id="P0A019"/>
<dbReference type="EnsemblBacteria" id="BAB42034">
    <property type="protein sequence ID" value="BAB42034"/>
    <property type="gene ID" value="BAB42034"/>
</dbReference>
<dbReference type="GeneID" id="98345253"/>
<dbReference type="KEGG" id="sau:SA0795"/>
<dbReference type="HOGENOM" id="CLU_108696_19_0_9"/>
<dbReference type="UniPathway" id="UPA00556"/>
<dbReference type="GO" id="GO:0005737">
    <property type="term" value="C:cytoplasm"/>
    <property type="evidence" value="ECO:0007669"/>
    <property type="project" value="UniProtKB-SubCell"/>
</dbReference>
<dbReference type="GO" id="GO:0036370">
    <property type="term" value="F:D-alanyl carrier activity"/>
    <property type="evidence" value="ECO:0007669"/>
    <property type="project" value="UniProtKB-UniRule"/>
</dbReference>
<dbReference type="GO" id="GO:0071555">
    <property type="term" value="P:cell wall organization"/>
    <property type="evidence" value="ECO:0007669"/>
    <property type="project" value="UniProtKB-KW"/>
</dbReference>
<dbReference type="GO" id="GO:0070395">
    <property type="term" value="P:lipoteichoic acid biosynthetic process"/>
    <property type="evidence" value="ECO:0007669"/>
    <property type="project" value="UniProtKB-UniRule"/>
</dbReference>
<dbReference type="Gene3D" id="1.10.1200.10">
    <property type="entry name" value="ACP-like"/>
    <property type="match status" value="1"/>
</dbReference>
<dbReference type="HAMAP" id="MF_00565">
    <property type="entry name" value="DltC"/>
    <property type="match status" value="1"/>
</dbReference>
<dbReference type="InterPro" id="IPR036736">
    <property type="entry name" value="ACP-like_sf"/>
</dbReference>
<dbReference type="InterPro" id="IPR003230">
    <property type="entry name" value="DltC"/>
</dbReference>
<dbReference type="InterPro" id="IPR009081">
    <property type="entry name" value="PP-bd_ACP"/>
</dbReference>
<dbReference type="NCBIfam" id="TIGR01688">
    <property type="entry name" value="dltC"/>
    <property type="match status" value="1"/>
</dbReference>
<dbReference type="NCBIfam" id="NF003464">
    <property type="entry name" value="PRK05087.1"/>
    <property type="match status" value="1"/>
</dbReference>
<dbReference type="Pfam" id="PF00550">
    <property type="entry name" value="PP-binding"/>
    <property type="match status" value="1"/>
</dbReference>
<dbReference type="SUPFAM" id="SSF47336">
    <property type="entry name" value="ACP-like"/>
    <property type="match status" value="1"/>
</dbReference>
<dbReference type="PROSITE" id="PS50075">
    <property type="entry name" value="CARRIER"/>
    <property type="match status" value="1"/>
</dbReference>
<protein>
    <recommendedName>
        <fullName evidence="1">D-alanyl carrier protein</fullName>
        <shortName evidence="1">DCP</shortName>
    </recommendedName>
    <alternativeName>
        <fullName evidence="1">D-alanine--poly(phosphoribitol) ligase subunit 2</fullName>
    </alternativeName>
</protein>
<keyword id="KW-0961">Cell wall biogenesis/degradation</keyword>
<keyword id="KW-0963">Cytoplasm</keyword>
<keyword id="KW-0596">Phosphopantetheine</keyword>
<keyword id="KW-0597">Phosphoprotein</keyword>
<name>DLTC_STAAN</name>
<gene>
    <name evidence="1" type="primary">dltC</name>
    <name type="ordered locus">SA0795</name>
</gene>
<reference key="1">
    <citation type="journal article" date="2001" name="Lancet">
        <title>Whole genome sequencing of meticillin-resistant Staphylococcus aureus.</title>
        <authorList>
            <person name="Kuroda M."/>
            <person name="Ohta T."/>
            <person name="Uchiyama I."/>
            <person name="Baba T."/>
            <person name="Yuzawa H."/>
            <person name="Kobayashi I."/>
            <person name="Cui L."/>
            <person name="Oguchi A."/>
            <person name="Aoki K."/>
            <person name="Nagai Y."/>
            <person name="Lian J.-Q."/>
            <person name="Ito T."/>
            <person name="Kanamori M."/>
            <person name="Matsumaru H."/>
            <person name="Maruyama A."/>
            <person name="Murakami H."/>
            <person name="Hosoyama A."/>
            <person name="Mizutani-Ui Y."/>
            <person name="Takahashi N.K."/>
            <person name="Sawano T."/>
            <person name="Inoue R."/>
            <person name="Kaito C."/>
            <person name="Sekimizu K."/>
            <person name="Hirakawa H."/>
            <person name="Kuhara S."/>
            <person name="Goto S."/>
            <person name="Yabuzaki J."/>
            <person name="Kanehisa M."/>
            <person name="Yamashita A."/>
            <person name="Oshima K."/>
            <person name="Furuya K."/>
            <person name="Yoshino C."/>
            <person name="Shiba T."/>
            <person name="Hattori M."/>
            <person name="Ogasawara N."/>
            <person name="Hayashi H."/>
            <person name="Hiramatsu K."/>
        </authorList>
    </citation>
    <scope>NUCLEOTIDE SEQUENCE [LARGE SCALE GENOMIC DNA]</scope>
    <source>
        <strain>N315</strain>
    </source>
</reference>
<comment type="function">
    <text evidence="1">Carrier protein involved in the D-alanylation of lipoteichoic acid (LTA). The loading of thioester-linked D-alanine onto DltC is catalyzed by D-alanine--D-alanyl carrier protein ligase DltA. The DltC-carried D-alanyl group is further transferred to cell membrane phosphatidylglycerol (PG) by forming an ester bond, probably catalyzed by DltD. D-alanylation of LTA plays an important role in modulating the properties of the cell wall in Gram-positive bacteria, influencing the net charge of the cell wall.</text>
</comment>
<comment type="pathway">
    <text evidence="1">Cell wall biogenesis; lipoteichoic acid biosynthesis.</text>
</comment>
<comment type="subcellular location">
    <subcellularLocation>
        <location evidence="1">Cytoplasm</location>
    </subcellularLocation>
</comment>
<comment type="PTM">
    <text evidence="1">4'-phosphopantetheine is transferred from CoA to a specific serine of apo-DCP.</text>
</comment>
<comment type="similarity">
    <text evidence="1">Belongs to the DltC family.</text>
</comment>
<sequence>MEFREQVLNLLAEVAENDIVKENPDVEIFEEGIIDSFQTVGLLLEIQNKLDIEVSIMDFDRDEWATPNKIVEALEELR</sequence>
<accession>P0A019</accession>
<accession>Q53663</accession>
<organism>
    <name type="scientific">Staphylococcus aureus (strain N315)</name>
    <dbReference type="NCBI Taxonomy" id="158879"/>
    <lineage>
        <taxon>Bacteria</taxon>
        <taxon>Bacillati</taxon>
        <taxon>Bacillota</taxon>
        <taxon>Bacilli</taxon>
        <taxon>Bacillales</taxon>
        <taxon>Staphylococcaceae</taxon>
        <taxon>Staphylococcus</taxon>
    </lineage>
</organism>